<sequence length="87" mass="9888">MKTKLNELLEFPCEFTYKVMGLAQPELVDQVVEVVQRHAPGDYTPQVKPSSKGNYHSVSITINATHIEQVETLYEELGNIEIVRMVL</sequence>
<dbReference type="EMBL" id="CP001600">
    <property type="protein sequence ID" value="ACR70100.1"/>
    <property type="molecule type" value="Genomic_DNA"/>
</dbReference>
<dbReference type="SMR" id="C5BGD7"/>
<dbReference type="STRING" id="67780.B6E78_06635"/>
<dbReference type="KEGG" id="eic:NT01EI_2946"/>
<dbReference type="HOGENOM" id="CLU_161438_2_1_6"/>
<dbReference type="OrthoDB" id="9793424at2"/>
<dbReference type="Proteomes" id="UP000001485">
    <property type="component" value="Chromosome"/>
</dbReference>
<dbReference type="GO" id="GO:0005829">
    <property type="term" value="C:cytosol"/>
    <property type="evidence" value="ECO:0007669"/>
    <property type="project" value="TreeGrafter"/>
</dbReference>
<dbReference type="FunFam" id="3.30.70.260:FF:000002">
    <property type="entry name" value="UPF0250 protein YbeD"/>
    <property type="match status" value="1"/>
</dbReference>
<dbReference type="Gene3D" id="3.30.70.260">
    <property type="match status" value="1"/>
</dbReference>
<dbReference type="HAMAP" id="MF_00659">
    <property type="entry name" value="UPF0250"/>
    <property type="match status" value="1"/>
</dbReference>
<dbReference type="InterPro" id="IPR007454">
    <property type="entry name" value="UPF0250_YbeD-like"/>
</dbReference>
<dbReference type="InterPro" id="IPR027471">
    <property type="entry name" value="YbeD-like_sf"/>
</dbReference>
<dbReference type="NCBIfam" id="NF003447">
    <property type="entry name" value="PRK04998.1"/>
    <property type="match status" value="1"/>
</dbReference>
<dbReference type="PANTHER" id="PTHR38036">
    <property type="entry name" value="UPF0250 PROTEIN YBED"/>
    <property type="match status" value="1"/>
</dbReference>
<dbReference type="PANTHER" id="PTHR38036:SF1">
    <property type="entry name" value="UPF0250 PROTEIN YBED"/>
    <property type="match status" value="1"/>
</dbReference>
<dbReference type="Pfam" id="PF04359">
    <property type="entry name" value="DUF493"/>
    <property type="match status" value="1"/>
</dbReference>
<dbReference type="SUPFAM" id="SSF117991">
    <property type="entry name" value="YbeD/HP0495-like"/>
    <property type="match status" value="1"/>
</dbReference>
<organism>
    <name type="scientific">Edwardsiella ictaluri (strain 93-146)</name>
    <dbReference type="NCBI Taxonomy" id="634503"/>
    <lineage>
        <taxon>Bacteria</taxon>
        <taxon>Pseudomonadati</taxon>
        <taxon>Pseudomonadota</taxon>
        <taxon>Gammaproteobacteria</taxon>
        <taxon>Enterobacterales</taxon>
        <taxon>Hafniaceae</taxon>
        <taxon>Edwardsiella</taxon>
    </lineage>
</organism>
<protein>
    <recommendedName>
        <fullName evidence="1">UPF0250 protein NT01EI_2946</fullName>
    </recommendedName>
</protein>
<reference key="1">
    <citation type="submission" date="2009-03" db="EMBL/GenBank/DDBJ databases">
        <title>Complete genome sequence of Edwardsiella ictaluri 93-146.</title>
        <authorList>
            <person name="Williams M.L."/>
            <person name="Gillaspy A.F."/>
            <person name="Dyer D.W."/>
            <person name="Thune R.L."/>
            <person name="Waldbieser G.C."/>
            <person name="Schuster S.C."/>
            <person name="Gipson J."/>
            <person name="Zaitshik J."/>
            <person name="Landry C."/>
            <person name="Lawrence M.L."/>
        </authorList>
    </citation>
    <scope>NUCLEOTIDE SEQUENCE [LARGE SCALE GENOMIC DNA]</scope>
    <source>
        <strain>93-146</strain>
    </source>
</reference>
<accession>C5BGD7</accession>
<comment type="similarity">
    <text evidence="1">Belongs to the UPF0250 family.</text>
</comment>
<evidence type="ECO:0000255" key="1">
    <source>
        <dbReference type="HAMAP-Rule" id="MF_00659"/>
    </source>
</evidence>
<feature type="chain" id="PRO_1000212471" description="UPF0250 protein NT01EI_2946">
    <location>
        <begin position="1"/>
        <end position="87"/>
    </location>
</feature>
<proteinExistence type="inferred from homology"/>
<gene>
    <name type="ordered locus">NT01EI_2946</name>
</gene>
<name>Y2946_EDWI9</name>